<accession>F4J2J6</accession>
<feature type="chain" id="PRO_0000424841" description="Protein REVEILLE 7-like">
    <location>
        <begin position="1"/>
        <end position="336"/>
    </location>
</feature>
<feature type="domain" description="HTH myb-type" evidence="2">
    <location>
        <begin position="60"/>
        <end position="114"/>
    </location>
</feature>
<feature type="DNA-binding region" description="H-T-H motif" evidence="2">
    <location>
        <begin position="87"/>
        <end position="110"/>
    </location>
</feature>
<feature type="region of interest" description="Disordered" evidence="3">
    <location>
        <begin position="114"/>
        <end position="197"/>
    </location>
</feature>
<feature type="compositionally biased region" description="Basic residues" evidence="3">
    <location>
        <begin position="134"/>
        <end position="144"/>
    </location>
</feature>
<feature type="compositionally biased region" description="Pro residues" evidence="3">
    <location>
        <begin position="145"/>
        <end position="158"/>
    </location>
</feature>
<feature type="compositionally biased region" description="Polar residues" evidence="3">
    <location>
        <begin position="167"/>
        <end position="189"/>
    </location>
</feature>
<protein>
    <recommendedName>
        <fullName>Protein REVEILLE 7-like</fullName>
    </recommendedName>
</protein>
<sequence length="336" mass="37605">MVMMIIIYTEPEISLFPLQDRSEELSSNVENGSCNSNEGINPETSSHWIENVVKVRKPYTVTKQREKWSEEEHDRFLEAIKLYGRGWRQIQEHIGTKTAVQIRSHAQKFFSKMAQEADSRSEGSVKAIVIPPPRPKRKPAHPYPRKSPVPYTQSPPPNLSAMEKGTKSPTSVLSSFGSEDQNNYTTSKQPFKDDSDIGSTPISSITLFGKIVLVAEESHKPSSYNDDDLKQMTCQENHYSGMLVDTNLSLGVWETFCTGSNAFGSVTEASENLEKSAEPISSSWKRLSSLEKQGSCNPVNASGFRPYKRCLSEREVTSSLTLVASDEKKSQRARIC</sequence>
<keyword id="KW-0238">DNA-binding</keyword>
<keyword id="KW-0539">Nucleus</keyword>
<keyword id="KW-1185">Reference proteome</keyword>
<keyword id="KW-0804">Transcription</keyword>
<keyword id="KW-0805">Transcription regulation</keyword>
<name>RVE7L_ARATH</name>
<dbReference type="EMBL" id="AC010927">
    <property type="status" value="NOT_ANNOTATED_CDS"/>
    <property type="molecule type" value="Genomic_DNA"/>
</dbReference>
<dbReference type="EMBL" id="CP002686">
    <property type="protein sequence ID" value="AEE74860.1"/>
    <property type="molecule type" value="Genomic_DNA"/>
</dbReference>
<dbReference type="RefSeq" id="NP_683543.1">
    <property type="nucleotide sequence ID" value="NM_148701.2"/>
</dbReference>
<dbReference type="SMR" id="F4J2J6"/>
<dbReference type="BioGRID" id="5507">
    <property type="interactions" value="2"/>
</dbReference>
<dbReference type="FunCoup" id="F4J2J6">
    <property type="interactions" value="14"/>
</dbReference>
<dbReference type="IntAct" id="F4J2J6">
    <property type="interactions" value="2"/>
</dbReference>
<dbReference type="STRING" id="3702.F4J2J6"/>
<dbReference type="PaxDb" id="3702-AT3G10113.1"/>
<dbReference type="EnsemblPlants" id="AT3G10113.1">
    <property type="protein sequence ID" value="AT3G10113.1"/>
    <property type="gene ID" value="AT3G10113"/>
</dbReference>
<dbReference type="GeneID" id="820173"/>
<dbReference type="Gramene" id="AT3G10113.1">
    <property type="protein sequence ID" value="AT3G10113.1"/>
    <property type="gene ID" value="AT3G10113"/>
</dbReference>
<dbReference type="KEGG" id="ath:AT3G10113"/>
<dbReference type="Araport" id="AT3G10113"/>
<dbReference type="TAIR" id="AT3G10113"/>
<dbReference type="eggNOG" id="KOG0724">
    <property type="taxonomic scope" value="Eukaryota"/>
</dbReference>
<dbReference type="HOGENOM" id="CLU_030536_0_0_1"/>
<dbReference type="InParanoid" id="F4J2J6"/>
<dbReference type="OMA" id="TCLANEN"/>
<dbReference type="OrthoDB" id="118550at2759"/>
<dbReference type="PhylomeDB" id="F4J2J6"/>
<dbReference type="PRO" id="PR:F4J2J6"/>
<dbReference type="Proteomes" id="UP000006548">
    <property type="component" value="Chromosome 3"/>
</dbReference>
<dbReference type="ExpressionAtlas" id="F4J2J6">
    <property type="expression patterns" value="baseline"/>
</dbReference>
<dbReference type="GO" id="GO:0005634">
    <property type="term" value="C:nucleus"/>
    <property type="evidence" value="ECO:0007669"/>
    <property type="project" value="UniProtKB-SubCell"/>
</dbReference>
<dbReference type="GO" id="GO:0003677">
    <property type="term" value="F:DNA binding"/>
    <property type="evidence" value="ECO:0007669"/>
    <property type="project" value="UniProtKB-KW"/>
</dbReference>
<dbReference type="GO" id="GO:0006355">
    <property type="term" value="P:regulation of DNA-templated transcription"/>
    <property type="evidence" value="ECO:0000304"/>
    <property type="project" value="TAIR"/>
</dbReference>
<dbReference type="CDD" id="cd00167">
    <property type="entry name" value="SANT"/>
    <property type="match status" value="1"/>
</dbReference>
<dbReference type="FunFam" id="1.10.10.60:FF:000023">
    <property type="entry name" value="protein REVEILLE 6 isoform X1"/>
    <property type="match status" value="1"/>
</dbReference>
<dbReference type="Gene3D" id="1.10.10.60">
    <property type="entry name" value="Homeodomain-like"/>
    <property type="match status" value="1"/>
</dbReference>
<dbReference type="InterPro" id="IPR009057">
    <property type="entry name" value="Homeodomain-like_sf"/>
</dbReference>
<dbReference type="InterPro" id="IPR017930">
    <property type="entry name" value="Myb_dom"/>
</dbReference>
<dbReference type="InterPro" id="IPR006447">
    <property type="entry name" value="Myb_dom_plants"/>
</dbReference>
<dbReference type="InterPro" id="IPR001005">
    <property type="entry name" value="SANT/Myb"/>
</dbReference>
<dbReference type="InterPro" id="IPR017884">
    <property type="entry name" value="SANT_dom"/>
</dbReference>
<dbReference type="NCBIfam" id="TIGR01557">
    <property type="entry name" value="myb_SHAQKYF"/>
    <property type="match status" value="1"/>
</dbReference>
<dbReference type="PANTHER" id="PTHR12802:SF164">
    <property type="entry name" value="PROTEIN REVEILLE 7-RELATED"/>
    <property type="match status" value="1"/>
</dbReference>
<dbReference type="PANTHER" id="PTHR12802">
    <property type="entry name" value="SWI/SNF COMPLEX-RELATED"/>
    <property type="match status" value="1"/>
</dbReference>
<dbReference type="Pfam" id="PF00249">
    <property type="entry name" value="Myb_DNA-binding"/>
    <property type="match status" value="1"/>
</dbReference>
<dbReference type="SMART" id="SM00717">
    <property type="entry name" value="SANT"/>
    <property type="match status" value="1"/>
</dbReference>
<dbReference type="SUPFAM" id="SSF46689">
    <property type="entry name" value="Homeodomain-like"/>
    <property type="match status" value="1"/>
</dbReference>
<dbReference type="PROSITE" id="PS51294">
    <property type="entry name" value="HTH_MYB"/>
    <property type="match status" value="1"/>
</dbReference>
<reference key="1">
    <citation type="journal article" date="2000" name="Nature">
        <title>Sequence and analysis of chromosome 3 of the plant Arabidopsis thaliana.</title>
        <authorList>
            <person name="Salanoubat M."/>
            <person name="Lemcke K."/>
            <person name="Rieger M."/>
            <person name="Ansorge W."/>
            <person name="Unseld M."/>
            <person name="Fartmann B."/>
            <person name="Valle G."/>
            <person name="Bloecker H."/>
            <person name="Perez-Alonso M."/>
            <person name="Obermaier B."/>
            <person name="Delseny M."/>
            <person name="Boutry M."/>
            <person name="Grivell L.A."/>
            <person name="Mache R."/>
            <person name="Puigdomenech P."/>
            <person name="De Simone V."/>
            <person name="Choisne N."/>
            <person name="Artiguenave F."/>
            <person name="Robert C."/>
            <person name="Brottier P."/>
            <person name="Wincker P."/>
            <person name="Cattolico L."/>
            <person name="Weissenbach J."/>
            <person name="Saurin W."/>
            <person name="Quetier F."/>
            <person name="Schaefer M."/>
            <person name="Mueller-Auer S."/>
            <person name="Gabel C."/>
            <person name="Fuchs M."/>
            <person name="Benes V."/>
            <person name="Wurmbach E."/>
            <person name="Drzonek H."/>
            <person name="Erfle H."/>
            <person name="Jordan N."/>
            <person name="Bangert S."/>
            <person name="Wiedelmann R."/>
            <person name="Kranz H."/>
            <person name="Voss H."/>
            <person name="Holland R."/>
            <person name="Brandt P."/>
            <person name="Nyakatura G."/>
            <person name="Vezzi A."/>
            <person name="D'Angelo M."/>
            <person name="Pallavicini A."/>
            <person name="Toppo S."/>
            <person name="Simionati B."/>
            <person name="Conrad A."/>
            <person name="Hornischer K."/>
            <person name="Kauer G."/>
            <person name="Loehnert T.-H."/>
            <person name="Nordsiek G."/>
            <person name="Reichelt J."/>
            <person name="Scharfe M."/>
            <person name="Schoen O."/>
            <person name="Bargues M."/>
            <person name="Terol J."/>
            <person name="Climent J."/>
            <person name="Navarro P."/>
            <person name="Collado C."/>
            <person name="Perez-Perez A."/>
            <person name="Ottenwaelder B."/>
            <person name="Duchemin D."/>
            <person name="Cooke R."/>
            <person name="Laudie M."/>
            <person name="Berger-Llauro C."/>
            <person name="Purnelle B."/>
            <person name="Masuy D."/>
            <person name="de Haan M."/>
            <person name="Maarse A.C."/>
            <person name="Alcaraz J.-P."/>
            <person name="Cottet A."/>
            <person name="Casacuberta E."/>
            <person name="Monfort A."/>
            <person name="Argiriou A."/>
            <person name="Flores M."/>
            <person name="Liguori R."/>
            <person name="Vitale D."/>
            <person name="Mannhaupt G."/>
            <person name="Haase D."/>
            <person name="Schoof H."/>
            <person name="Rudd S."/>
            <person name="Zaccaria P."/>
            <person name="Mewes H.-W."/>
            <person name="Mayer K.F.X."/>
            <person name="Kaul S."/>
            <person name="Town C.D."/>
            <person name="Koo H.L."/>
            <person name="Tallon L.J."/>
            <person name="Jenkins J."/>
            <person name="Rooney T."/>
            <person name="Rizzo M."/>
            <person name="Walts A."/>
            <person name="Utterback T."/>
            <person name="Fujii C.Y."/>
            <person name="Shea T.P."/>
            <person name="Creasy T.H."/>
            <person name="Haas B."/>
            <person name="Maiti R."/>
            <person name="Wu D."/>
            <person name="Peterson J."/>
            <person name="Van Aken S."/>
            <person name="Pai G."/>
            <person name="Militscher J."/>
            <person name="Sellers P."/>
            <person name="Gill J.E."/>
            <person name="Feldblyum T.V."/>
            <person name="Preuss D."/>
            <person name="Lin X."/>
            <person name="Nierman W.C."/>
            <person name="Salzberg S.L."/>
            <person name="White O."/>
            <person name="Venter J.C."/>
            <person name="Fraser C.M."/>
            <person name="Kaneko T."/>
            <person name="Nakamura Y."/>
            <person name="Sato S."/>
            <person name="Kato T."/>
            <person name="Asamizu E."/>
            <person name="Sasamoto S."/>
            <person name="Kimura T."/>
            <person name="Idesawa K."/>
            <person name="Kawashima K."/>
            <person name="Kishida Y."/>
            <person name="Kiyokawa C."/>
            <person name="Kohara M."/>
            <person name="Matsumoto M."/>
            <person name="Matsuno A."/>
            <person name="Muraki A."/>
            <person name="Nakayama S."/>
            <person name="Nakazaki N."/>
            <person name="Shinpo S."/>
            <person name="Takeuchi C."/>
            <person name="Wada T."/>
            <person name="Watanabe A."/>
            <person name="Yamada M."/>
            <person name="Yasuda M."/>
            <person name="Tabata S."/>
        </authorList>
    </citation>
    <scope>NUCLEOTIDE SEQUENCE [LARGE SCALE GENOMIC DNA]</scope>
    <source>
        <strain>cv. Columbia</strain>
    </source>
</reference>
<reference key="2">
    <citation type="journal article" date="2017" name="Plant J.">
        <title>Araport11: a complete reannotation of the Arabidopsis thaliana reference genome.</title>
        <authorList>
            <person name="Cheng C.Y."/>
            <person name="Krishnakumar V."/>
            <person name="Chan A.P."/>
            <person name="Thibaud-Nissen F."/>
            <person name="Schobel S."/>
            <person name="Town C.D."/>
        </authorList>
    </citation>
    <scope>GENOME REANNOTATION</scope>
    <source>
        <strain>cv. Columbia</strain>
    </source>
</reference>
<reference key="3">
    <citation type="journal article" date="2003" name="Plant Cell">
        <title>The novel MYB protein EARLY-PHYTOCHROME-RESPONSIVE1 is a component of a slave circadian oscillator in Arabidopsis.</title>
        <authorList>
            <person name="Kuno N."/>
            <person name="Moeller S.G."/>
            <person name="Shinomura T."/>
            <person name="Xu X."/>
            <person name="Chua N.H."/>
            <person name="Furuya M."/>
        </authorList>
    </citation>
    <scope>IDENTIFICATION</scope>
</reference>
<reference key="4">
    <citation type="journal article" date="2009" name="Proc. Natl. Acad. Sci. U.S.A.">
        <title>REVEILLE1, a Myb-like transcription factor, integrates the circadian clock and auxin pathways.</title>
        <authorList>
            <person name="Rawat R."/>
            <person name="Schwartz J."/>
            <person name="Jones M.A."/>
            <person name="Sairanen I."/>
            <person name="Cheng Y."/>
            <person name="Andersson C.R."/>
            <person name="Zhao Y."/>
            <person name="Ljung K."/>
            <person name="Harmer S.L."/>
        </authorList>
    </citation>
    <scope>GENE FAMILY</scope>
    <scope>NOMENCLATURE</scope>
</reference>
<organism>
    <name type="scientific">Arabidopsis thaliana</name>
    <name type="common">Mouse-ear cress</name>
    <dbReference type="NCBI Taxonomy" id="3702"/>
    <lineage>
        <taxon>Eukaryota</taxon>
        <taxon>Viridiplantae</taxon>
        <taxon>Streptophyta</taxon>
        <taxon>Embryophyta</taxon>
        <taxon>Tracheophyta</taxon>
        <taxon>Spermatophyta</taxon>
        <taxon>Magnoliopsida</taxon>
        <taxon>eudicotyledons</taxon>
        <taxon>Gunneridae</taxon>
        <taxon>Pentapetalae</taxon>
        <taxon>rosids</taxon>
        <taxon>malvids</taxon>
        <taxon>Brassicales</taxon>
        <taxon>Brassicaceae</taxon>
        <taxon>Camelineae</taxon>
        <taxon>Arabidopsis</taxon>
    </lineage>
</organism>
<evidence type="ECO:0000250" key="1"/>
<evidence type="ECO:0000255" key="2">
    <source>
        <dbReference type="PROSITE-ProRule" id="PRU00625"/>
    </source>
</evidence>
<evidence type="ECO:0000256" key="3">
    <source>
        <dbReference type="SAM" id="MobiDB-lite"/>
    </source>
</evidence>
<comment type="function">
    <text evidence="1">Probable transcription factor.</text>
</comment>
<comment type="subcellular location">
    <subcellularLocation>
        <location evidence="2">Nucleus</location>
    </subcellularLocation>
</comment>
<gene>
    <name type="primary">RVE7L</name>
    <name type="ordered locus">At3g10113</name>
    <name type="ORF">T22K18</name>
</gene>
<proteinExistence type="inferred from homology"/>